<comment type="function">
    <text evidence="1">Cotranslationally removes the N-terminal methionine from nascent proteins. The N-terminal methionine is often cleaved when the second residue in the primary sequence is small and uncharged (Met-Ala-, Cys, Gly, Pro, Ser, Thr, or Val).</text>
</comment>
<comment type="catalytic activity">
    <reaction evidence="1">
        <text>Release of N-terminal amino acids, preferentially methionine, from peptides and arylamides.</text>
        <dbReference type="EC" id="3.4.11.18"/>
    </reaction>
</comment>
<comment type="cofactor">
    <cofactor evidence="1">
        <name>Co(2+)</name>
        <dbReference type="ChEBI" id="CHEBI:48828"/>
    </cofactor>
    <cofactor evidence="1">
        <name>Zn(2+)</name>
        <dbReference type="ChEBI" id="CHEBI:29105"/>
    </cofactor>
    <cofactor evidence="1">
        <name>Mn(2+)</name>
        <dbReference type="ChEBI" id="CHEBI:29035"/>
    </cofactor>
    <cofactor evidence="1">
        <name>Fe(2+)</name>
        <dbReference type="ChEBI" id="CHEBI:29033"/>
    </cofactor>
    <text evidence="1">Binds 2 divalent metal cations per subunit. Has a high-affinity and a low affinity metal-binding site. The true nature of the physiological cofactor is under debate. The enzyme is active with cobalt, zinc, manganese or divalent iron ions. Most likely, methionine aminopeptidases function as mononuclear Fe(2+)-metalloproteases under physiological conditions, and the catalytically relevant metal-binding site has been assigned to the histidine-containing high-affinity site.</text>
</comment>
<comment type="subcellular location">
    <subcellularLocation>
        <location evidence="1">Cytoplasm</location>
    </subcellularLocation>
</comment>
<comment type="similarity">
    <text evidence="1">Belongs to the peptidase M24A family. Methionine aminopeptidase eukaryotic type 2 subfamily.</text>
</comment>
<gene>
    <name type="ORF">PTT_01727</name>
</gene>
<accession>E3RD74</accession>
<sequence>MGSKSPEDHRQGPDGGSADTAIAIVNPPKSAAASGLLQGMLEGQDEDGDDDDDEKTGIDLKTNDGAKKKRKRNKKKSKKLSVVQQTSPPRVPLATLFDNQPYPEGQIVDYNVKDDNLQRTTAEELRHLAAVRDMDDDFLKDYRKAAEVHRQVRRYAQAIAKPGVSMTRLAEEIDDGVRALTGHEGLETGDALKAGLAFPTGLCLNHVGAHWTPNAGAKDVILKHDDVLKVDFGVHVNGRIVDSAFTVAANPVYDNLLAAVKAATNTGLEEAGIDARIDHISEAIQEVMESYEVELNGKTIPIKAVRNITGHNILRYRIHGDKQVPFVKTKTDQRMEEGDIFAIETFGSTGKAYLQDDVGVYGYGRNENMNPAVLHQSSAKSLLKTIDANFGTLVFARRQLERLPGVEKYHLGMRTLVNSGLVESYAPLVDIPGSYIAQFEHTVLLRPNCKEIISRGEDY</sequence>
<protein>
    <recommendedName>
        <fullName evidence="1">Methionine aminopeptidase 2-2</fullName>
        <shortName evidence="1">MAP 2-2</shortName>
        <shortName evidence="1">MetAP 2-2</shortName>
        <ecNumber evidence="1">3.4.11.18</ecNumber>
    </recommendedName>
    <alternativeName>
        <fullName evidence="1">Peptidase M</fullName>
    </alternativeName>
</protein>
<evidence type="ECO:0000255" key="1">
    <source>
        <dbReference type="HAMAP-Rule" id="MF_03175"/>
    </source>
</evidence>
<evidence type="ECO:0000256" key="2">
    <source>
        <dbReference type="SAM" id="MobiDB-lite"/>
    </source>
</evidence>
<organism>
    <name type="scientific">Pyrenophora teres f. teres (strain 0-1)</name>
    <name type="common">Barley net blotch fungus</name>
    <name type="synonym">Drechslera teres f. teres</name>
    <dbReference type="NCBI Taxonomy" id="861557"/>
    <lineage>
        <taxon>Eukaryota</taxon>
        <taxon>Fungi</taxon>
        <taxon>Dikarya</taxon>
        <taxon>Ascomycota</taxon>
        <taxon>Pezizomycotina</taxon>
        <taxon>Dothideomycetes</taxon>
        <taxon>Pleosporomycetidae</taxon>
        <taxon>Pleosporales</taxon>
        <taxon>Pleosporineae</taxon>
        <taxon>Pleosporaceae</taxon>
        <taxon>Pyrenophora</taxon>
    </lineage>
</organism>
<name>MAP22_PYRTT</name>
<dbReference type="EC" id="3.4.11.18" evidence="1"/>
<dbReference type="EMBL" id="GL532027">
    <property type="protein sequence ID" value="EFQ96321.1"/>
    <property type="molecule type" value="Genomic_DNA"/>
</dbReference>
<dbReference type="RefSeq" id="XP_003295579.1">
    <property type="nucleotide sequence ID" value="XM_003295531.1"/>
</dbReference>
<dbReference type="SMR" id="E3RD74"/>
<dbReference type="STRING" id="861557.E3RD74"/>
<dbReference type="EnsemblFungi" id="EFQ96321">
    <property type="protein sequence ID" value="EFQ96321"/>
    <property type="gene ID" value="PTT_01727"/>
</dbReference>
<dbReference type="KEGG" id="pte:PTT_01727"/>
<dbReference type="eggNOG" id="KOG2775">
    <property type="taxonomic scope" value="Eukaryota"/>
</dbReference>
<dbReference type="HOGENOM" id="CLU_015857_7_1_1"/>
<dbReference type="OrthoDB" id="7848262at2759"/>
<dbReference type="Proteomes" id="UP000001067">
    <property type="component" value="Unassembled WGS sequence"/>
</dbReference>
<dbReference type="GO" id="GO:0005737">
    <property type="term" value="C:cytoplasm"/>
    <property type="evidence" value="ECO:0007669"/>
    <property type="project" value="UniProtKB-SubCell"/>
</dbReference>
<dbReference type="GO" id="GO:0004239">
    <property type="term" value="F:initiator methionyl aminopeptidase activity"/>
    <property type="evidence" value="ECO:0007669"/>
    <property type="project" value="UniProtKB-UniRule"/>
</dbReference>
<dbReference type="GO" id="GO:0046872">
    <property type="term" value="F:metal ion binding"/>
    <property type="evidence" value="ECO:0007669"/>
    <property type="project" value="UniProtKB-UniRule"/>
</dbReference>
<dbReference type="GO" id="GO:0070006">
    <property type="term" value="F:metalloaminopeptidase activity"/>
    <property type="evidence" value="ECO:0007669"/>
    <property type="project" value="UniProtKB-UniRule"/>
</dbReference>
<dbReference type="GO" id="GO:0006508">
    <property type="term" value="P:proteolysis"/>
    <property type="evidence" value="ECO:0007669"/>
    <property type="project" value="UniProtKB-KW"/>
</dbReference>
<dbReference type="CDD" id="cd01088">
    <property type="entry name" value="MetAP2"/>
    <property type="match status" value="1"/>
</dbReference>
<dbReference type="Gene3D" id="3.90.230.10">
    <property type="entry name" value="Creatinase/methionine aminopeptidase superfamily"/>
    <property type="match status" value="1"/>
</dbReference>
<dbReference type="Gene3D" id="1.10.10.10">
    <property type="entry name" value="Winged helix-like DNA-binding domain superfamily/Winged helix DNA-binding domain"/>
    <property type="match status" value="1"/>
</dbReference>
<dbReference type="HAMAP" id="MF_03175">
    <property type="entry name" value="MetAP_2_euk"/>
    <property type="match status" value="1"/>
</dbReference>
<dbReference type="InterPro" id="IPR036005">
    <property type="entry name" value="Creatinase/aminopeptidase-like"/>
</dbReference>
<dbReference type="InterPro" id="IPR050247">
    <property type="entry name" value="Met_Aminopeptidase_Type2"/>
</dbReference>
<dbReference type="InterPro" id="IPR000994">
    <property type="entry name" value="Pept_M24"/>
</dbReference>
<dbReference type="InterPro" id="IPR001714">
    <property type="entry name" value="Pept_M24_MAP"/>
</dbReference>
<dbReference type="InterPro" id="IPR002468">
    <property type="entry name" value="Pept_M24A_MAP2"/>
</dbReference>
<dbReference type="InterPro" id="IPR018349">
    <property type="entry name" value="Pept_M24A_MAP2_BS"/>
</dbReference>
<dbReference type="InterPro" id="IPR036388">
    <property type="entry name" value="WH-like_DNA-bd_sf"/>
</dbReference>
<dbReference type="InterPro" id="IPR036390">
    <property type="entry name" value="WH_DNA-bd_sf"/>
</dbReference>
<dbReference type="NCBIfam" id="TIGR00501">
    <property type="entry name" value="met_pdase_II"/>
    <property type="match status" value="1"/>
</dbReference>
<dbReference type="PANTHER" id="PTHR45777">
    <property type="entry name" value="METHIONINE AMINOPEPTIDASE 2"/>
    <property type="match status" value="1"/>
</dbReference>
<dbReference type="PANTHER" id="PTHR45777:SF1">
    <property type="entry name" value="METHIONINE AMINOPEPTIDASE 2-2"/>
    <property type="match status" value="1"/>
</dbReference>
<dbReference type="Pfam" id="PF00557">
    <property type="entry name" value="Peptidase_M24"/>
    <property type="match status" value="1"/>
</dbReference>
<dbReference type="PRINTS" id="PR00599">
    <property type="entry name" value="MAPEPTIDASE"/>
</dbReference>
<dbReference type="SUPFAM" id="SSF55920">
    <property type="entry name" value="Creatinase/aminopeptidase"/>
    <property type="match status" value="1"/>
</dbReference>
<dbReference type="SUPFAM" id="SSF46785">
    <property type="entry name" value="Winged helix' DNA-binding domain"/>
    <property type="match status" value="1"/>
</dbReference>
<dbReference type="PROSITE" id="PS01202">
    <property type="entry name" value="MAP_2"/>
    <property type="match status" value="1"/>
</dbReference>
<proteinExistence type="inferred from homology"/>
<keyword id="KW-0031">Aminopeptidase</keyword>
<keyword id="KW-0963">Cytoplasm</keyword>
<keyword id="KW-0378">Hydrolase</keyword>
<keyword id="KW-0479">Metal-binding</keyword>
<keyword id="KW-0645">Protease</keyword>
<keyword id="KW-1185">Reference proteome</keyword>
<reference key="1">
    <citation type="journal article" date="2010" name="Genome Biol.">
        <title>A first genome assembly of the barley fungal pathogen Pyrenophora teres f. teres.</title>
        <authorList>
            <person name="Ellwood S.R."/>
            <person name="Liu Z."/>
            <person name="Syme R.A."/>
            <person name="Lai Z."/>
            <person name="Hane J.K."/>
            <person name="Keiper F."/>
            <person name="Moffat C.S."/>
            <person name="Oliver R.P."/>
            <person name="Friesen T.L."/>
        </authorList>
    </citation>
    <scope>NUCLEOTIDE SEQUENCE [LARGE SCALE GENOMIC DNA]</scope>
    <source>
        <strain>0-1</strain>
    </source>
</reference>
<feature type="chain" id="PRO_0000407635" description="Methionine aminopeptidase 2-2">
    <location>
        <begin position="1"/>
        <end position="459"/>
    </location>
</feature>
<feature type="region of interest" description="Disordered" evidence="2">
    <location>
        <begin position="1"/>
        <end position="87"/>
    </location>
</feature>
<feature type="compositionally biased region" description="Basic and acidic residues" evidence="2">
    <location>
        <begin position="1"/>
        <end position="12"/>
    </location>
</feature>
<feature type="compositionally biased region" description="Acidic residues" evidence="2">
    <location>
        <begin position="43"/>
        <end position="54"/>
    </location>
</feature>
<feature type="compositionally biased region" description="Basic and acidic residues" evidence="2">
    <location>
        <begin position="55"/>
        <end position="66"/>
    </location>
</feature>
<feature type="compositionally biased region" description="Basic residues" evidence="2">
    <location>
        <begin position="67"/>
        <end position="79"/>
    </location>
</feature>
<feature type="binding site" evidence="1">
    <location>
        <position position="210"/>
    </location>
    <ligand>
        <name>substrate</name>
    </ligand>
</feature>
<feature type="binding site" evidence="1">
    <location>
        <position position="231"/>
    </location>
    <ligand>
        <name>a divalent metal cation</name>
        <dbReference type="ChEBI" id="CHEBI:60240"/>
        <label>1</label>
    </ligand>
</feature>
<feature type="binding site" evidence="1">
    <location>
        <position position="242"/>
    </location>
    <ligand>
        <name>a divalent metal cation</name>
        <dbReference type="ChEBI" id="CHEBI:60240"/>
        <label>1</label>
    </ligand>
</feature>
<feature type="binding site" evidence="1">
    <location>
        <position position="242"/>
    </location>
    <ligand>
        <name>a divalent metal cation</name>
        <dbReference type="ChEBI" id="CHEBI:60240"/>
        <label>2</label>
        <note>catalytic</note>
    </ligand>
</feature>
<feature type="binding site" evidence="1">
    <location>
        <position position="311"/>
    </location>
    <ligand>
        <name>a divalent metal cation</name>
        <dbReference type="ChEBI" id="CHEBI:60240"/>
        <label>2</label>
        <note>catalytic</note>
    </ligand>
</feature>
<feature type="binding site" evidence="1">
    <location>
        <position position="319"/>
    </location>
    <ligand>
        <name>substrate</name>
    </ligand>
</feature>
<feature type="binding site" evidence="1">
    <location>
        <position position="344"/>
    </location>
    <ligand>
        <name>a divalent metal cation</name>
        <dbReference type="ChEBI" id="CHEBI:60240"/>
        <label>2</label>
        <note>catalytic</note>
    </ligand>
</feature>
<feature type="binding site" evidence="1">
    <location>
        <position position="440"/>
    </location>
    <ligand>
        <name>a divalent metal cation</name>
        <dbReference type="ChEBI" id="CHEBI:60240"/>
        <label>1</label>
    </ligand>
</feature>
<feature type="binding site" evidence="1">
    <location>
        <position position="440"/>
    </location>
    <ligand>
        <name>a divalent metal cation</name>
        <dbReference type="ChEBI" id="CHEBI:60240"/>
        <label>2</label>
        <note>catalytic</note>
    </ligand>
</feature>